<organism>
    <name type="scientific">Campylobacter jejuni subsp. jejuni serotype O:23/36 (strain 81-176)</name>
    <dbReference type="NCBI Taxonomy" id="354242"/>
    <lineage>
        <taxon>Bacteria</taxon>
        <taxon>Pseudomonadati</taxon>
        <taxon>Campylobacterota</taxon>
        <taxon>Epsilonproteobacteria</taxon>
        <taxon>Campylobacterales</taxon>
        <taxon>Campylobacteraceae</taxon>
        <taxon>Campylobacter</taxon>
    </lineage>
</organism>
<dbReference type="EMBL" id="CP000538">
    <property type="protein sequence ID" value="EAQ72696.1"/>
    <property type="molecule type" value="Genomic_DNA"/>
</dbReference>
<dbReference type="RefSeq" id="WP_002851353.1">
    <property type="nucleotide sequence ID" value="NC_008787.1"/>
</dbReference>
<dbReference type="SMR" id="A1W1U6"/>
<dbReference type="KEGG" id="cjj:CJJ81176_1690"/>
<dbReference type="eggNOG" id="COG0096">
    <property type="taxonomic scope" value="Bacteria"/>
</dbReference>
<dbReference type="HOGENOM" id="CLU_098428_0_2_7"/>
<dbReference type="Proteomes" id="UP000000646">
    <property type="component" value="Chromosome"/>
</dbReference>
<dbReference type="GO" id="GO:1990904">
    <property type="term" value="C:ribonucleoprotein complex"/>
    <property type="evidence" value="ECO:0007669"/>
    <property type="project" value="UniProtKB-KW"/>
</dbReference>
<dbReference type="GO" id="GO:0005840">
    <property type="term" value="C:ribosome"/>
    <property type="evidence" value="ECO:0007669"/>
    <property type="project" value="UniProtKB-KW"/>
</dbReference>
<dbReference type="GO" id="GO:0019843">
    <property type="term" value="F:rRNA binding"/>
    <property type="evidence" value="ECO:0007669"/>
    <property type="project" value="UniProtKB-UniRule"/>
</dbReference>
<dbReference type="GO" id="GO:0003735">
    <property type="term" value="F:structural constituent of ribosome"/>
    <property type="evidence" value="ECO:0007669"/>
    <property type="project" value="InterPro"/>
</dbReference>
<dbReference type="GO" id="GO:0006412">
    <property type="term" value="P:translation"/>
    <property type="evidence" value="ECO:0007669"/>
    <property type="project" value="UniProtKB-UniRule"/>
</dbReference>
<dbReference type="FunFam" id="3.30.1370.30:FF:000002">
    <property type="entry name" value="30S ribosomal protein S8"/>
    <property type="match status" value="1"/>
</dbReference>
<dbReference type="FunFam" id="3.30.1490.10:FF:000001">
    <property type="entry name" value="30S ribosomal protein S8"/>
    <property type="match status" value="1"/>
</dbReference>
<dbReference type="Gene3D" id="3.30.1370.30">
    <property type="match status" value="1"/>
</dbReference>
<dbReference type="Gene3D" id="3.30.1490.10">
    <property type="match status" value="1"/>
</dbReference>
<dbReference type="HAMAP" id="MF_01302_B">
    <property type="entry name" value="Ribosomal_uS8_B"/>
    <property type="match status" value="1"/>
</dbReference>
<dbReference type="InterPro" id="IPR000630">
    <property type="entry name" value="Ribosomal_uS8"/>
</dbReference>
<dbReference type="InterPro" id="IPR047863">
    <property type="entry name" value="Ribosomal_uS8_CS"/>
</dbReference>
<dbReference type="InterPro" id="IPR035987">
    <property type="entry name" value="Ribosomal_uS8_sf"/>
</dbReference>
<dbReference type="NCBIfam" id="NF001109">
    <property type="entry name" value="PRK00136.1"/>
    <property type="match status" value="1"/>
</dbReference>
<dbReference type="PANTHER" id="PTHR11758">
    <property type="entry name" value="40S RIBOSOMAL PROTEIN S15A"/>
    <property type="match status" value="1"/>
</dbReference>
<dbReference type="Pfam" id="PF00410">
    <property type="entry name" value="Ribosomal_S8"/>
    <property type="match status" value="1"/>
</dbReference>
<dbReference type="SUPFAM" id="SSF56047">
    <property type="entry name" value="Ribosomal protein S8"/>
    <property type="match status" value="1"/>
</dbReference>
<dbReference type="PROSITE" id="PS00053">
    <property type="entry name" value="RIBOSOMAL_S8"/>
    <property type="match status" value="1"/>
</dbReference>
<name>RS8_CAMJJ</name>
<comment type="function">
    <text evidence="1">One of the primary rRNA binding proteins, it binds directly to 16S rRNA central domain where it helps coordinate assembly of the platform of the 30S subunit.</text>
</comment>
<comment type="subunit">
    <text evidence="1">Part of the 30S ribosomal subunit. Contacts proteins S5 and S12.</text>
</comment>
<comment type="similarity">
    <text evidence="1">Belongs to the universal ribosomal protein uS8 family.</text>
</comment>
<proteinExistence type="inferred from homology"/>
<feature type="chain" id="PRO_0000290817" description="Small ribosomal subunit protein uS8">
    <location>
        <begin position="1"/>
        <end position="131"/>
    </location>
</feature>
<gene>
    <name evidence="1" type="primary">rpsH</name>
    <name type="ordered locus">CJJ81176_1690</name>
</gene>
<accession>A1W1U6</accession>
<reference key="1">
    <citation type="submission" date="2006-12" db="EMBL/GenBank/DDBJ databases">
        <authorList>
            <person name="Fouts D.E."/>
            <person name="Nelson K.E."/>
            <person name="Sebastian Y."/>
        </authorList>
    </citation>
    <scope>NUCLEOTIDE SEQUENCE [LARGE SCALE GENOMIC DNA]</scope>
    <source>
        <strain>81-176</strain>
    </source>
</reference>
<protein>
    <recommendedName>
        <fullName evidence="1">Small ribosomal subunit protein uS8</fullName>
    </recommendedName>
    <alternativeName>
        <fullName evidence="2">30S ribosomal protein S8</fullName>
    </alternativeName>
</protein>
<keyword id="KW-0687">Ribonucleoprotein</keyword>
<keyword id="KW-0689">Ribosomal protein</keyword>
<keyword id="KW-0694">RNA-binding</keyword>
<keyword id="KW-0699">rRNA-binding</keyword>
<evidence type="ECO:0000255" key="1">
    <source>
        <dbReference type="HAMAP-Rule" id="MF_01302"/>
    </source>
</evidence>
<evidence type="ECO:0000305" key="2"/>
<sequence length="131" mass="14733">MINDIISDSLTRIRNAGMRKLETTKLLHSKVVEALVGIFQAKGYIESFNVIEEDKKKFINVVLKYDEKGKSVINELKRISKPGRRVYKGKDEIKRFKNGYGTIVVSTSHGVLANDEAYKAGVGGEILCTIW</sequence>